<evidence type="ECO:0000250" key="1">
    <source>
        <dbReference type="UniProtKB" id="O94993"/>
    </source>
</evidence>
<evidence type="ECO:0000255" key="2">
    <source>
        <dbReference type="PROSITE-ProRule" id="PRU00267"/>
    </source>
</evidence>
<evidence type="ECO:0000256" key="3">
    <source>
        <dbReference type="SAM" id="MobiDB-lite"/>
    </source>
</evidence>
<evidence type="ECO:0000269" key="4">
    <source>
    </source>
</evidence>
<evidence type="ECO:0000269" key="5">
    <source>
    </source>
</evidence>
<evidence type="ECO:0000269" key="6">
    <source>
    </source>
</evidence>
<evidence type="ECO:0000269" key="7">
    <source>
    </source>
</evidence>
<evidence type="ECO:0000269" key="8">
    <source>
    </source>
</evidence>
<dbReference type="EMBL" id="AY005801">
    <property type="protein sequence ID" value="AAF99391.1"/>
    <property type="molecule type" value="mRNA"/>
</dbReference>
<dbReference type="CCDS" id="CCDS24570.1"/>
<dbReference type="RefSeq" id="NP_775560.1">
    <property type="nucleotide sequence ID" value="NM_173384.3"/>
</dbReference>
<dbReference type="SMR" id="Q8CGW4"/>
<dbReference type="FunCoup" id="Q8CGW4">
    <property type="interactions" value="1311"/>
</dbReference>
<dbReference type="STRING" id="10090.ENSMUSP00000037519"/>
<dbReference type="GlyGen" id="Q8CGW4">
    <property type="glycosylation" value="1 site"/>
</dbReference>
<dbReference type="iPTMnet" id="Q8CGW4"/>
<dbReference type="PhosphoSitePlus" id="Q8CGW4"/>
<dbReference type="SwissPalm" id="Q8CGW4"/>
<dbReference type="PaxDb" id="10090-ENSMUSP00000037519"/>
<dbReference type="ProteomicsDB" id="261114"/>
<dbReference type="Antibodypedia" id="1746">
    <property type="antibodies" value="217 antibodies from 29 providers"/>
</dbReference>
<dbReference type="DNASU" id="214105"/>
<dbReference type="Ensembl" id="ENSMUST00000049038.4">
    <property type="protein sequence ID" value="ENSMUSP00000037519.4"/>
    <property type="gene ID" value="ENSMUSG00000040489.6"/>
</dbReference>
<dbReference type="GeneID" id="214105"/>
<dbReference type="KEGG" id="mmu:214105"/>
<dbReference type="UCSC" id="uc011xtj.1">
    <property type="organism name" value="mouse"/>
</dbReference>
<dbReference type="AGR" id="MGI:1341157"/>
<dbReference type="CTD" id="11063"/>
<dbReference type="MGI" id="MGI:1341157">
    <property type="gene designation" value="Sox30"/>
</dbReference>
<dbReference type="VEuPathDB" id="HostDB:ENSMUSG00000040489"/>
<dbReference type="eggNOG" id="KOG0527">
    <property type="taxonomic scope" value="Eukaryota"/>
</dbReference>
<dbReference type="GeneTree" id="ENSGT00940000161042"/>
<dbReference type="HOGENOM" id="CLU_021249_0_0_1"/>
<dbReference type="InParanoid" id="Q8CGW4"/>
<dbReference type="OMA" id="FIPSPAY"/>
<dbReference type="OrthoDB" id="6247875at2759"/>
<dbReference type="PhylomeDB" id="Q8CGW4"/>
<dbReference type="TreeFam" id="TF336594"/>
<dbReference type="BioGRID-ORCS" id="214105">
    <property type="hits" value="8 hits in 76 CRISPR screens"/>
</dbReference>
<dbReference type="ChiTaRS" id="Sox30">
    <property type="organism name" value="mouse"/>
</dbReference>
<dbReference type="PRO" id="PR:Q8CGW4"/>
<dbReference type="Proteomes" id="UP000000589">
    <property type="component" value="Chromosome 11"/>
</dbReference>
<dbReference type="RNAct" id="Q8CGW4">
    <property type="molecule type" value="protein"/>
</dbReference>
<dbReference type="Bgee" id="ENSMUSG00000040489">
    <property type="expression patterns" value="Expressed in ureteric bud trunk and 23 other cell types or tissues"/>
</dbReference>
<dbReference type="GO" id="GO:0010369">
    <property type="term" value="C:chromocenter"/>
    <property type="evidence" value="ECO:0000314"/>
    <property type="project" value="UniProtKB"/>
</dbReference>
<dbReference type="GO" id="GO:0005737">
    <property type="term" value="C:cytoplasm"/>
    <property type="evidence" value="ECO:0000250"/>
    <property type="project" value="UniProtKB"/>
</dbReference>
<dbReference type="GO" id="GO:0005829">
    <property type="term" value="C:cytosol"/>
    <property type="evidence" value="ECO:0007669"/>
    <property type="project" value="Ensembl"/>
</dbReference>
<dbReference type="GO" id="GO:0005654">
    <property type="term" value="C:nucleoplasm"/>
    <property type="evidence" value="ECO:0007669"/>
    <property type="project" value="Ensembl"/>
</dbReference>
<dbReference type="GO" id="GO:0005634">
    <property type="term" value="C:nucleus"/>
    <property type="evidence" value="ECO:0000314"/>
    <property type="project" value="UniProtKB"/>
</dbReference>
<dbReference type="GO" id="GO:0008013">
    <property type="term" value="F:beta-catenin binding"/>
    <property type="evidence" value="ECO:0007669"/>
    <property type="project" value="Ensembl"/>
</dbReference>
<dbReference type="GO" id="GO:0001228">
    <property type="term" value="F:DNA-binding transcription activator activity, RNA polymerase II-specific"/>
    <property type="evidence" value="ECO:0000315"/>
    <property type="project" value="UniProtKB"/>
</dbReference>
<dbReference type="GO" id="GO:0003700">
    <property type="term" value="F:DNA-binding transcription factor activity"/>
    <property type="evidence" value="ECO:0000314"/>
    <property type="project" value="UniProtKB"/>
</dbReference>
<dbReference type="GO" id="GO:0001227">
    <property type="term" value="F:DNA-binding transcription repressor activity, RNA polymerase II-specific"/>
    <property type="evidence" value="ECO:0000315"/>
    <property type="project" value="UniProtKB"/>
</dbReference>
<dbReference type="GO" id="GO:0000978">
    <property type="term" value="F:RNA polymerase II cis-regulatory region sequence-specific DNA binding"/>
    <property type="evidence" value="ECO:0007669"/>
    <property type="project" value="Ensembl"/>
</dbReference>
<dbReference type="GO" id="GO:0000122">
    <property type="term" value="P:negative regulation of transcription by RNA polymerase II"/>
    <property type="evidence" value="ECO:0000315"/>
    <property type="project" value="UniProtKB"/>
</dbReference>
<dbReference type="GO" id="GO:0030178">
    <property type="term" value="P:negative regulation of Wnt signaling pathway"/>
    <property type="evidence" value="ECO:0000250"/>
    <property type="project" value="UniProtKB"/>
</dbReference>
<dbReference type="GO" id="GO:0045944">
    <property type="term" value="P:positive regulation of transcription by RNA polymerase II"/>
    <property type="evidence" value="ECO:0000314"/>
    <property type="project" value="UniProtKB"/>
</dbReference>
<dbReference type="GO" id="GO:0120211">
    <property type="term" value="P:proacrosomal vesicle fusion"/>
    <property type="evidence" value="ECO:0000315"/>
    <property type="project" value="UniProtKB"/>
</dbReference>
<dbReference type="GO" id="GO:0031960">
    <property type="term" value="P:response to corticosteroid"/>
    <property type="evidence" value="ECO:0007669"/>
    <property type="project" value="Ensembl"/>
</dbReference>
<dbReference type="GO" id="GO:0007286">
    <property type="term" value="P:spermatid development"/>
    <property type="evidence" value="ECO:0000315"/>
    <property type="project" value="UniProtKB"/>
</dbReference>
<dbReference type="CDD" id="cd22033">
    <property type="entry name" value="HMG-box_SoxH_SOX30"/>
    <property type="match status" value="1"/>
</dbReference>
<dbReference type="FunFam" id="1.10.30.10:FF:000027">
    <property type="entry name" value="Transcription factor SOX-30"/>
    <property type="match status" value="1"/>
</dbReference>
<dbReference type="Gene3D" id="1.10.30.10">
    <property type="entry name" value="High mobility group box domain"/>
    <property type="match status" value="1"/>
</dbReference>
<dbReference type="InterPro" id="IPR009071">
    <property type="entry name" value="HMG_box_dom"/>
</dbReference>
<dbReference type="InterPro" id="IPR036910">
    <property type="entry name" value="HMG_box_dom_sf"/>
</dbReference>
<dbReference type="InterPro" id="IPR052856">
    <property type="entry name" value="SOX30_TF"/>
</dbReference>
<dbReference type="PANTHER" id="PTHR47279">
    <property type="entry name" value="TRANSCRIPTION FACTOR SOX-30"/>
    <property type="match status" value="1"/>
</dbReference>
<dbReference type="PANTHER" id="PTHR47279:SF1">
    <property type="entry name" value="TRANSCRIPTION FACTOR SOX-30"/>
    <property type="match status" value="1"/>
</dbReference>
<dbReference type="Pfam" id="PF00505">
    <property type="entry name" value="HMG_box"/>
    <property type="match status" value="1"/>
</dbReference>
<dbReference type="SMART" id="SM00398">
    <property type="entry name" value="HMG"/>
    <property type="match status" value="1"/>
</dbReference>
<dbReference type="SUPFAM" id="SSF47095">
    <property type="entry name" value="HMG-box"/>
    <property type="match status" value="1"/>
</dbReference>
<dbReference type="PROSITE" id="PS50118">
    <property type="entry name" value="HMG_BOX_2"/>
    <property type="match status" value="1"/>
</dbReference>
<sequence length="782" mass="83938">MERARPEPPPPPPPPPRQPPRPTPPRPLRPAPPAQPVEAATFRAAAAERSQSPSAQATAAMAAVASSCGEAAAAGAQAAGTRRLLQVKPEQVLLLPPGGPGVPPAPDEGAAAAAAAAAAAASSAQARLLQLRPELLLLPPQSAADGGPCRPELHPMQPRTLLVKAEKQELGAGLDLSVGSRRTTEAGPRASRAAKLDGTGKALDGRRSDEKKAKLEAEEAPRDALKGGEGKSLLAIGEGVIKTEEPDRPRDDCRLGTEATSNGLVHSSKEAILAQPPSAFGPHQQDLRFPLTLHTVPPGARIQFQGPPPSELIRLSKVPLTPVPIKMQSLLEPSVKIETKDVPLTVLPSDAGIPDTPFSKDRNGHVKRPMNAFMVWARIHRPALAKANPAANNAEISVQLGLEWNKLSEEQKKPYYDEAQKIKEKHREEFPGWVYQPRPGKRKRFPLSVSNVFSGTTQNIISTNPTTIYPYRSPTYSVVIPGLQNTITHPVGEAPPAIQLPTPAVQRPSPITLFQPSVSSTGPVAVPPPSLTPRPSLPPQRFSGPSQTDIHRLPSGSSRSVKRSTPGSLESTTRIPAGASTAHARFATSPIQPPKEYASVSTCPRSTPIPPATPIPHSHVYQPPPLGHPATLFGTPPRFSFHHPYFLPGPHYFPSSTCPYSRPPFGYGNFPSSMPECLGYYEDRYQKHEAIFSALNRDYPFRDYPDEHTHSEDSRSCESMDGPPYYSSHGHGGEEYLNAMPTLDIGALENVFTAPASAPSGVQQVNVTDSDEEEEEKVLRNL</sequence>
<keyword id="KW-0010">Activator</keyword>
<keyword id="KW-0963">Cytoplasm</keyword>
<keyword id="KW-0238">DNA-binding</keyword>
<keyword id="KW-0539">Nucleus</keyword>
<keyword id="KW-1185">Reference proteome</keyword>
<keyword id="KW-0678">Repressor</keyword>
<keyword id="KW-0804">Transcription</keyword>
<keyword id="KW-0805">Transcription regulation</keyword>
<feature type="chain" id="PRO_0000048775" description="Transcription factor SOX-30">
    <location>
        <begin position="1"/>
        <end position="782"/>
    </location>
</feature>
<feature type="DNA-binding region" description="HMG box" evidence="2">
    <location>
        <begin position="366"/>
        <end position="434"/>
    </location>
</feature>
<feature type="region of interest" description="Disordered" evidence="3">
    <location>
        <begin position="1"/>
        <end position="37"/>
    </location>
</feature>
<feature type="region of interest" description="Disordered" evidence="3">
    <location>
        <begin position="95"/>
        <end position="117"/>
    </location>
</feature>
<feature type="region of interest" description="Disordered" evidence="3">
    <location>
        <begin position="139"/>
        <end position="226"/>
    </location>
</feature>
<feature type="region of interest" description="Disordered" evidence="3">
    <location>
        <begin position="501"/>
        <end position="604"/>
    </location>
</feature>
<feature type="region of interest" description="Disordered" evidence="3">
    <location>
        <begin position="704"/>
        <end position="724"/>
    </location>
</feature>
<feature type="region of interest" description="Disordered" evidence="3">
    <location>
        <begin position="756"/>
        <end position="782"/>
    </location>
</feature>
<feature type="compositionally biased region" description="Pro residues" evidence="3">
    <location>
        <begin position="7"/>
        <end position="35"/>
    </location>
</feature>
<feature type="compositionally biased region" description="Pro residues" evidence="3">
    <location>
        <begin position="97"/>
        <end position="106"/>
    </location>
</feature>
<feature type="compositionally biased region" description="Basic and acidic residues" evidence="3">
    <location>
        <begin position="203"/>
        <end position="226"/>
    </location>
</feature>
<feature type="compositionally biased region" description="Polar residues" evidence="3">
    <location>
        <begin position="512"/>
        <end position="522"/>
    </location>
</feature>
<feature type="compositionally biased region" description="Pro residues" evidence="3">
    <location>
        <begin position="525"/>
        <end position="538"/>
    </location>
</feature>
<feature type="compositionally biased region" description="Polar residues" evidence="3">
    <location>
        <begin position="555"/>
        <end position="574"/>
    </location>
</feature>
<feature type="compositionally biased region" description="Basic and acidic residues" evidence="3">
    <location>
        <begin position="704"/>
        <end position="718"/>
    </location>
</feature>
<proteinExistence type="evidence at protein level"/>
<gene>
    <name type="primary">Sox30</name>
</gene>
<protein>
    <recommendedName>
        <fullName>Transcription factor SOX-30</fullName>
    </recommendedName>
</protein>
<comment type="function">
    <text evidence="1 6 7 8">Acts both as a transcriptional activator and a repressor (PubMed:29848638, PubMed:29866902). Binds to the DNA sequence 5'-ACAAT-3' and shows a preference for guanine residues surrounding this core motif (PubMed:29866902). Binds to its own promoter and activates its own transcription (PubMed:29848638, PubMed:29866902). Required to activate the expression of postmeiotic genes involved in spermiogenesis (PubMed:29848638, PubMed:29866902). Binds to the promoter region of CTNNB1 and represses its transcription which leads to inhibition of Wnt signaling (PubMed:29739711). Also inhibits Wnt signaling by binding to the CTNNB1 protein, preventing interaction of CTNNB1 with TCF7L2/TCF4 (By similarity).</text>
</comment>
<comment type="subunit">
    <text evidence="6">Interacts with CTNNB1, competitively inhibiting CTNNB1-TCF7L2/TCF4 interaction.</text>
</comment>
<comment type="subcellular location">
    <subcellularLocation>
        <location evidence="5 7 8">Nucleus</location>
    </subcellularLocation>
    <subcellularLocation>
        <location evidence="1">Cytoplasm</location>
    </subcellularLocation>
    <text evidence="7">Enriched at the chromocenter.</text>
</comment>
<comment type="tissue specificity">
    <text evidence="4 5 6 7 8">Expressed in the lung (at protein level) (PubMed:29739711). Expressed in testes (at protein level) (PubMed:10359848, PubMed:25609838, PubMed:29848638). Expressed in preleptotene spermatocytes, round spermatids, and elongated spermatids in the testis (at protein level) (PubMed:25609838, PubMed:29866902). Expressed in pachytene spermatocytes during stages 3 to 8 of spermatogenesis (at protein level) (PubMed:25609838, PubMed:29848638, PubMed:29866902). Increased expression in diplotene spermatocytes at stage 9-11 and in metaphase spermatocytes or secondary spermatocytes at stage 12 (PubMed:25609838, PubMed:29848638). Expressed in ovaries (PubMed:29848638).</text>
</comment>
<comment type="developmental stage">
    <text evidence="4 7 8">Expressed in the testes at 13.5 dpc (PubMed:10359848, PubMed:29848638). Also expressed in the mesonephros, metanephros, brain, lung, heart and stomach at 13.5 dpc (PubMed:10359848). Expressed in the testes at 14.5 dpc (PubMed:29848638). Expressed in the ovary at 13.5 and 14.5 dpc (PubMed:29848638). Expressed weakly in the testes at postnatal day 14 (P14), strongly expressed from P21 onwards (PubMed:29866902). Expressed in the nucleus of pachytene spermatocytes in stages 5 to 6 of spermatogenesis (PubMed:29866902). Expressed in round spermatids and increased expression in pachytene spermatocytes in stages 7 to 8 of spermatogenesis (PubMed:29866902). Expressed in the nucleus of diplotene spermatocytes in stages 11 to 12 of spermatogenesis, however expression in the nuclei of spermatids is lost (PubMed:29866902).</text>
</comment>
<comment type="induction">
    <text evidence="7">Induced in germline stem cells by retinoic acid.</text>
</comment>
<comment type="disruption phenotype">
    <text evidence="6 7 8">Knockout mice are viable, morphologically normal, but males are sterile (PubMed:29848638, PubMed:29866902). Male mice exhibit small testes and epididymis (PubMed:29848638). Multinuclear syncytia present in the seminiferous tubules, with degenerated multi-chromocenter round spermatids and multinucleated giant cells in the epididymis lumen (PubMed:29848638). Increased numbers of apoptotic cells in the testes and epididymis (PubMed:29848638). Increased expression of CTNNB1, MYC, CCND1, and MMP7 in lung cells (PubMed:29739711). Increase in diplotene spermatocytes in the testes, indicative of defects in the later stages of meiosis (PubMed:29866902). Developmental failure of the large nuclear docking acrosome to develop during the cap phase of spermiogenesis (PubMed:29848638, PubMed:29866902). In addition disruption of proacrosomic vesicle translocation during spermatid differentiation results in the absence of elongating spermatids and therefore viable sperm (PubMed:29866902). No effect on transcription or processing of piRNA precursors (PubMed:29866902).</text>
</comment>
<reference key="1">
    <citation type="submission" date="2000-07" db="EMBL/GenBank/DDBJ databases">
        <title>Characterization of Sox-30 as an rfp interacting protein.</title>
        <authorList>
            <person name="Tissot C."/>
            <person name="Bardos J."/>
            <person name="Freemont P."/>
        </authorList>
    </citation>
    <scope>NUCLEOTIDE SEQUENCE [MRNA]</scope>
</reference>
<reference key="2">
    <citation type="journal article" date="1999" name="Nucleic Acids Res.">
        <title>Identification of a novel Sry-related gene and its germ cell-specific expression.</title>
        <authorList>
            <person name="Osaki E."/>
            <person name="Nishina Y."/>
            <person name="Inazawa J."/>
            <person name="Copeland N.G."/>
            <person name="Gilbert D.J."/>
            <person name="Jenkins N.A."/>
            <person name="Ohsugi M."/>
            <person name="Tezuka T."/>
            <person name="Yoshida M."/>
            <person name="Semba K."/>
        </authorList>
    </citation>
    <scope>TISSUE SPECIFICITY</scope>
    <scope>DEVELOPMENTAL STAGE</scope>
</reference>
<reference key="3">
    <citation type="journal article" date="2010" name="Cell">
        <title>A tissue-specific atlas of mouse protein phosphorylation and expression.</title>
        <authorList>
            <person name="Huttlin E.L."/>
            <person name="Jedrychowski M.P."/>
            <person name="Elias J.E."/>
            <person name="Goswami T."/>
            <person name="Rad R."/>
            <person name="Beausoleil S.A."/>
            <person name="Villen J."/>
            <person name="Haas W."/>
            <person name="Sowa M.E."/>
            <person name="Gygi S.P."/>
        </authorList>
    </citation>
    <scope>IDENTIFICATION BY MASS SPECTROMETRY [LARGE SCALE ANALYSIS]</scope>
    <source>
        <tissue>Testis</tissue>
    </source>
</reference>
<reference key="4">
    <citation type="journal article" date="2015" name="Biol. Reprod.">
        <title>Combining RNA and protein profiling data with network interactions identifies genes associated with spermatogenesis in mouse and human.</title>
        <authorList>
            <person name="Petit F.G."/>
            <person name="Kervarrec C."/>
            <person name="Jamin S.P."/>
            <person name="Smagulova F."/>
            <person name="Hao C."/>
            <person name="Becker E."/>
            <person name="Jegou B."/>
            <person name="Chalmel F."/>
            <person name="Primig M."/>
        </authorList>
    </citation>
    <scope>TISSUE SPECIFICITY</scope>
    <scope>SUBCELLULAR LOCATION</scope>
</reference>
<reference key="5">
    <citation type="journal article" date="2018" name="Development">
        <title>Sox30 initiates transcription of haploid genes during late meiosis and spermiogenesis in mouse testes.</title>
        <authorList>
            <person name="Bai S."/>
            <person name="Fu K."/>
            <person name="Yin H."/>
            <person name="Cui Y."/>
            <person name="Yue Q."/>
            <person name="Li W."/>
            <person name="Cheng L."/>
            <person name="Tan H."/>
            <person name="Liu X."/>
            <person name="Guo Y."/>
            <person name="Zhang Y."/>
            <person name="Xie J."/>
            <person name="He W."/>
            <person name="Wang Y."/>
            <person name="Feng H."/>
            <person name="Xin C."/>
            <person name="Zhang J."/>
            <person name="Lin M."/>
            <person name="Shen B."/>
            <person name="Sun Z."/>
            <person name="Guo X."/>
            <person name="Zheng K."/>
            <person name="Ye L."/>
        </authorList>
    </citation>
    <scope>FUNCTION</scope>
    <scope>SUBCELLULAR LOCATION</scope>
    <scope>TISSUE SPECIFICITY</scope>
    <scope>DEVELOPMENTAL STAGE</scope>
    <scope>DISRUPTION PHENOTYPE</scope>
</reference>
<reference key="6">
    <citation type="journal article" date="2019" name="Development">
        <authorList>
            <person name="Bai S."/>
            <person name="Fu K."/>
            <person name="Yin H."/>
            <person name="Cui Y."/>
            <person name="Yue Q."/>
            <person name="Li W."/>
            <person name="Cheng L."/>
            <person name="Tan H."/>
            <person name="Liu X."/>
            <person name="Guo Y."/>
            <person name="Zhang Y."/>
            <person name="Xie J."/>
            <person name="He W."/>
            <person name="Wang Y."/>
            <person name="Feng H."/>
            <person name="Xin C."/>
            <person name="Zhang J."/>
            <person name="Lin M."/>
            <person name="Shen B."/>
            <person name="Sun Z."/>
            <person name="Guo X."/>
            <person name="Zheng K."/>
            <person name="Ye L."/>
        </authorList>
    </citation>
    <scope>ERRATUM OF PUBMED:29866902</scope>
</reference>
<reference key="7">
    <citation type="journal article" date="2018" name="Development">
        <title>The transcription factor SOX30 is a key regulator of mouse spermiogenesis.</title>
        <authorList>
            <person name="Zhang D."/>
            <person name="Xie D."/>
            <person name="Lin X."/>
            <person name="Ma L."/>
            <person name="Chen J."/>
            <person name="Zhang D."/>
            <person name="Wang Y."/>
            <person name="Duo S."/>
            <person name="Feng Y."/>
            <person name="Zheng C."/>
            <person name="Jiang B."/>
            <person name="Ning Y."/>
            <person name="Han C."/>
        </authorList>
    </citation>
    <scope>FUNCTION</scope>
    <scope>SUBCELLULAR LOCATION</scope>
    <scope>TISSUE SPECIFICITY</scope>
    <scope>DEVELOPMENTAL STAGE</scope>
    <scope>INDUCTION BY RETINOIC ACID</scope>
    <scope>DISRUPTION PHENOTYPE</scope>
</reference>
<reference key="8">
    <citation type="journal article" date="2018" name="EBioMedicine">
        <title>SOX30 Inhibits Tumor Metastasis through Attenuating Wnt-Signaling via Transcriptional and Posttranslational Regulation of beta-Catenin in Lung Cancer.</title>
        <authorList>
            <person name="Han F."/>
            <person name="Liu W.B."/>
            <person name="Shi X.Y."/>
            <person name="Yang J.T."/>
            <person name="Zhang X."/>
            <person name="Li Z.M."/>
            <person name="Jiang X."/>
            <person name="Yin L."/>
            <person name="Li J.J."/>
            <person name="Huang C.S."/>
            <person name="Cao J."/>
            <person name="Liu J.Y."/>
        </authorList>
    </citation>
    <scope>FUNCTION</scope>
    <scope>INTERACTION WITH CTNNB1</scope>
    <scope>TISSUE SPECIFICITY</scope>
    <scope>DISRUPTION PHENOTYPE</scope>
</reference>
<name>SOX30_MOUSE</name>
<organism>
    <name type="scientific">Mus musculus</name>
    <name type="common">Mouse</name>
    <dbReference type="NCBI Taxonomy" id="10090"/>
    <lineage>
        <taxon>Eukaryota</taxon>
        <taxon>Metazoa</taxon>
        <taxon>Chordata</taxon>
        <taxon>Craniata</taxon>
        <taxon>Vertebrata</taxon>
        <taxon>Euteleostomi</taxon>
        <taxon>Mammalia</taxon>
        <taxon>Eutheria</taxon>
        <taxon>Euarchontoglires</taxon>
        <taxon>Glires</taxon>
        <taxon>Rodentia</taxon>
        <taxon>Myomorpha</taxon>
        <taxon>Muroidea</taxon>
        <taxon>Muridae</taxon>
        <taxon>Murinae</taxon>
        <taxon>Mus</taxon>
        <taxon>Mus</taxon>
    </lineage>
</organism>
<accession>Q8CGW4</accession>